<organism>
    <name type="scientific">Gibberella zeae (strain ATCC MYA-4620 / CBS 123657 / FGSC 9075 / NRRL 31084 / PH-1)</name>
    <name type="common">Wheat head blight fungus</name>
    <name type="synonym">Fusarium graminearum</name>
    <dbReference type="NCBI Taxonomy" id="229533"/>
    <lineage>
        <taxon>Eukaryota</taxon>
        <taxon>Fungi</taxon>
        <taxon>Dikarya</taxon>
        <taxon>Ascomycota</taxon>
        <taxon>Pezizomycotina</taxon>
        <taxon>Sordariomycetes</taxon>
        <taxon>Hypocreomycetidae</taxon>
        <taxon>Hypocreales</taxon>
        <taxon>Nectriaceae</taxon>
        <taxon>Fusarium</taxon>
    </lineage>
</organism>
<gene>
    <name type="ORF">FG08078</name>
    <name type="ORF">FGRAMPH1_01T09065</name>
</gene>
<proteinExistence type="evidence at transcript level"/>
<protein>
    <recommendedName>
        <fullName evidence="3">Amidase FG08078</fullName>
        <ecNumber evidence="5">3.5.1.-</ecNumber>
    </recommendedName>
    <alternativeName>
        <fullName evidence="3">Butenolide biosynthesis cluster protein FG08078</fullName>
    </alternativeName>
</protein>
<accession>I1RV18</accession>
<evidence type="ECO:0000250" key="1">
    <source>
        <dbReference type="UniProtKB" id="P97612"/>
    </source>
</evidence>
<evidence type="ECO:0000269" key="2">
    <source>
    </source>
</evidence>
<evidence type="ECO:0000303" key="3">
    <source>
    </source>
</evidence>
<evidence type="ECO:0000305" key="4"/>
<evidence type="ECO:0000305" key="5">
    <source>
    </source>
</evidence>
<reference key="1">
    <citation type="journal article" date="2007" name="Science">
        <title>The Fusarium graminearum genome reveals a link between localized polymorphism and pathogen specialization.</title>
        <authorList>
            <person name="Cuomo C.A."/>
            <person name="Gueldener U."/>
            <person name="Xu J.-R."/>
            <person name="Trail F."/>
            <person name="Turgeon B.G."/>
            <person name="Di Pietro A."/>
            <person name="Walton J.D."/>
            <person name="Ma L.-J."/>
            <person name="Baker S.E."/>
            <person name="Rep M."/>
            <person name="Adam G."/>
            <person name="Antoniw J."/>
            <person name="Baldwin T."/>
            <person name="Calvo S.E."/>
            <person name="Chang Y.-L."/>
            <person name="DeCaprio D."/>
            <person name="Gale L.R."/>
            <person name="Gnerre S."/>
            <person name="Goswami R.S."/>
            <person name="Hammond-Kosack K."/>
            <person name="Harris L.J."/>
            <person name="Hilburn K."/>
            <person name="Kennell J.C."/>
            <person name="Kroken S."/>
            <person name="Magnuson J.K."/>
            <person name="Mannhaupt G."/>
            <person name="Mauceli E.W."/>
            <person name="Mewes H.-W."/>
            <person name="Mitterbauer R."/>
            <person name="Muehlbauer G."/>
            <person name="Muensterkoetter M."/>
            <person name="Nelson D."/>
            <person name="O'Donnell K."/>
            <person name="Ouellet T."/>
            <person name="Qi W."/>
            <person name="Quesneville H."/>
            <person name="Roncero M.I.G."/>
            <person name="Seong K.-Y."/>
            <person name="Tetko I.V."/>
            <person name="Urban M."/>
            <person name="Waalwijk C."/>
            <person name="Ward T.J."/>
            <person name="Yao J."/>
            <person name="Birren B.W."/>
            <person name="Kistler H.C."/>
        </authorList>
    </citation>
    <scope>NUCLEOTIDE SEQUENCE [LARGE SCALE GENOMIC DNA]</scope>
    <source>
        <strain>ATCC MYA-4620 / CBS 123657 / FGSC 9075 / NRRL 31084 / PH-1</strain>
    </source>
</reference>
<reference key="2">
    <citation type="journal article" date="2010" name="Nature">
        <title>Comparative genomics reveals mobile pathogenicity chromosomes in Fusarium.</title>
        <authorList>
            <person name="Ma L.-J."/>
            <person name="van der Does H.C."/>
            <person name="Borkovich K.A."/>
            <person name="Coleman J.J."/>
            <person name="Daboussi M.-J."/>
            <person name="Di Pietro A."/>
            <person name="Dufresne M."/>
            <person name="Freitag M."/>
            <person name="Grabherr M."/>
            <person name="Henrissat B."/>
            <person name="Houterman P.M."/>
            <person name="Kang S."/>
            <person name="Shim W.-B."/>
            <person name="Woloshuk C."/>
            <person name="Xie X."/>
            <person name="Xu J.-R."/>
            <person name="Antoniw J."/>
            <person name="Baker S.E."/>
            <person name="Bluhm B.H."/>
            <person name="Breakspear A."/>
            <person name="Brown D.W."/>
            <person name="Butchko R.A.E."/>
            <person name="Chapman S."/>
            <person name="Coulson R."/>
            <person name="Coutinho P.M."/>
            <person name="Danchin E.G.J."/>
            <person name="Diener A."/>
            <person name="Gale L.R."/>
            <person name="Gardiner D.M."/>
            <person name="Goff S."/>
            <person name="Hammond-Kosack K.E."/>
            <person name="Hilburn K."/>
            <person name="Hua-Van A."/>
            <person name="Jonkers W."/>
            <person name="Kazan K."/>
            <person name="Kodira C.D."/>
            <person name="Koehrsen M."/>
            <person name="Kumar L."/>
            <person name="Lee Y.-H."/>
            <person name="Li L."/>
            <person name="Manners J.M."/>
            <person name="Miranda-Saavedra D."/>
            <person name="Mukherjee M."/>
            <person name="Park G."/>
            <person name="Park J."/>
            <person name="Park S.-Y."/>
            <person name="Proctor R.H."/>
            <person name="Regev A."/>
            <person name="Ruiz-Roldan M.C."/>
            <person name="Sain D."/>
            <person name="Sakthikumar S."/>
            <person name="Sykes S."/>
            <person name="Schwartz D.C."/>
            <person name="Turgeon B.G."/>
            <person name="Wapinski I."/>
            <person name="Yoder O."/>
            <person name="Young S."/>
            <person name="Zeng Q."/>
            <person name="Zhou S."/>
            <person name="Galagan J."/>
            <person name="Cuomo C.A."/>
            <person name="Kistler H.C."/>
            <person name="Rep M."/>
        </authorList>
    </citation>
    <scope>GENOME REANNOTATION</scope>
    <source>
        <strain>ATCC MYA-4620 / CBS 123657 / FGSC 9075 / NRRL 31084 / PH-1</strain>
    </source>
</reference>
<reference key="3">
    <citation type="journal article" date="2015" name="BMC Genomics">
        <title>The completed genome sequence of the pathogenic ascomycete fungus Fusarium graminearum.</title>
        <authorList>
            <person name="King R."/>
            <person name="Urban M."/>
            <person name="Hammond-Kosack M.C.U."/>
            <person name="Hassani-Pak K."/>
            <person name="Hammond-Kosack K.E."/>
        </authorList>
    </citation>
    <scope>NUCLEOTIDE SEQUENCE [LARGE SCALE GENOMIC DNA]</scope>
    <source>
        <strain>ATCC MYA-4620 / CBS 123657 / FGSC 9075 / NRRL 31084 / PH-1</strain>
    </source>
</reference>
<reference key="4">
    <citation type="journal article" date="2007" name="Fungal Genet. Biol.">
        <title>A novel gene cluster in Fusarium graminearum contains a gene that contributes to butenolide synthesis.</title>
        <authorList>
            <person name="Harris L.J."/>
            <person name="Alexander N.J."/>
            <person name="Saparno A."/>
            <person name="Blackwell B."/>
            <person name="McCormick S.P."/>
            <person name="Desjardins A.E."/>
            <person name="Robert L.S."/>
            <person name="Tinker N."/>
            <person name="Hattori J."/>
            <person name="Piche C."/>
            <person name="Schernthaner J.P."/>
            <person name="Watson R."/>
            <person name="Ouellet T."/>
        </authorList>
    </citation>
    <scope>FUNCTION</scope>
    <scope>INDUCTION</scope>
    <scope>PATHWAY</scope>
</reference>
<feature type="chain" id="PRO_0000450723" description="Amidase FG08078">
    <location>
        <begin position="1"/>
        <end position="546"/>
    </location>
</feature>
<feature type="active site" description="Charge relay system" evidence="1">
    <location>
        <position position="129"/>
    </location>
</feature>
<feature type="active site" description="Charge relay system" evidence="1">
    <location>
        <position position="204"/>
    </location>
</feature>
<feature type="active site" description="Acyl-ester intermediate" evidence="1">
    <location>
        <position position="228"/>
    </location>
</feature>
<dbReference type="EC" id="3.5.1.-" evidence="5"/>
<dbReference type="EMBL" id="HG970333">
    <property type="protein sequence ID" value="CEF76335.1"/>
    <property type="molecule type" value="Genomic_DNA"/>
</dbReference>
<dbReference type="RefSeq" id="XP_011320744.1">
    <property type="nucleotide sequence ID" value="XM_011322442.1"/>
</dbReference>
<dbReference type="SMR" id="I1RV18"/>
<dbReference type="FunCoup" id="I1RV18">
    <property type="interactions" value="65"/>
</dbReference>
<dbReference type="STRING" id="229533.I1RV18"/>
<dbReference type="KEGG" id="fgr:FGSG_08078"/>
<dbReference type="VEuPathDB" id="FungiDB:FGRAMPH1_01G09065"/>
<dbReference type="eggNOG" id="KOG1212">
    <property type="taxonomic scope" value="Eukaryota"/>
</dbReference>
<dbReference type="HOGENOM" id="CLU_009600_9_2_1"/>
<dbReference type="InParanoid" id="I1RV18"/>
<dbReference type="OrthoDB" id="47446at110618"/>
<dbReference type="Proteomes" id="UP000070720">
    <property type="component" value="Chromosome 2"/>
</dbReference>
<dbReference type="GO" id="GO:0016787">
    <property type="term" value="F:hydrolase activity"/>
    <property type="evidence" value="ECO:0007669"/>
    <property type="project" value="UniProtKB-KW"/>
</dbReference>
<dbReference type="Gene3D" id="3.90.1300.10">
    <property type="entry name" value="Amidase signature (AS) domain"/>
    <property type="match status" value="1"/>
</dbReference>
<dbReference type="InterPro" id="IPR023631">
    <property type="entry name" value="Amidase_dom"/>
</dbReference>
<dbReference type="InterPro" id="IPR036928">
    <property type="entry name" value="AS_sf"/>
</dbReference>
<dbReference type="PANTHER" id="PTHR46072">
    <property type="entry name" value="AMIDASE-RELATED-RELATED"/>
    <property type="match status" value="1"/>
</dbReference>
<dbReference type="Pfam" id="PF01425">
    <property type="entry name" value="Amidase"/>
    <property type="match status" value="1"/>
</dbReference>
<dbReference type="PIRSF" id="PIRSF001221">
    <property type="entry name" value="Amidase_fungi"/>
    <property type="match status" value="1"/>
</dbReference>
<dbReference type="SUPFAM" id="SSF75304">
    <property type="entry name" value="Amidase signature (AS) enzymes"/>
    <property type="match status" value="1"/>
</dbReference>
<name>BUT78_GIBZE</name>
<sequence length="546" mass="60107">MSWKAIAKAAQAEVLDAIPTKWKLDPAKYRTLTDVTSVPRECGILSDAQLSITDLTALEVVKRIESRELTAVQALEAFGARTAIAHQLVNCLMDWFYEDGLRQAEELDKSFKATGKLKGPLHGVPVALKDFHFVAGRPTTTGYVSRRDFRPEHDSALVKTLRDAGAVFYCKTTMPQSGMAIETVSNLWGRTLNPYNTALSAGGSSGGDAVLVALKGTPITPSTDLGGSIRVPAAFNGLYAIRPTSDRIPKGGMDNINSGQISIKLSCGPICHSMEDLESFTKLINAYPENQNDPTSVPVPWKTVKPIEGKLTIGLMKWDKVVMPHPPVIRALEHTKRTLEKAGHEVVEFDVPFDCWDAIQTTFDTYYQSGHSGTLSTLEATGEPLIPAFEDLIKVFGSKEISAAESQQLNVKARIFREKFRDAWDATTKLTSTGRPVDALICPTAPAVGYPHDFNVYWGYTSLFNLLDYPSVILPVANFKVNPQDDPVASNYKPLETNPYDKPNHELYKPELFSSQPSTIQVVGRPFQDEELIKVSSVMDDLLRAM</sequence>
<keyword id="KW-0378">Hydrolase</keyword>
<keyword id="KW-1185">Reference proteome</keyword>
<comment type="function">
    <text evidence="2 5">Amidase; part of the gene cluster that mediates the biosynthesis of butenolide, a mycotoxin that shows antibiotic activity but does not seem to play a major role in the spread of head blight in wheat (PubMed:17175185). Butenolide is derived from glutamic acid via a 4-acetamido-2-butenoic acid intermediate (Probable). The predicted function of the NADH:flavin oxidoreductase FG08077, the cytochrome P450 monooxygenase FG08079, the decarboxylase FG08083, and the putative acetyltransferase FG08082 are consistent with this pathway, however, the respective activities of the butelonide biosynthesis cluster enzymes have still to be experimentally determined (Probable).</text>
</comment>
<comment type="pathway">
    <text evidence="5">Mycotoxin biosynthesis.</text>
</comment>
<comment type="induction">
    <text evidence="2">Highly expressed under trichothecene-producing conditions.</text>
</comment>
<comment type="similarity">
    <text evidence="4">Belongs to the amidase family.</text>
</comment>